<sequence length="636" mass="68619">MYNEIPTNRPATPLLDSIDSPAELRALSEKQLPQLADELRAFLLYTVGQTGGHFGAGLGVVELTIALHYVYDTPEDRLVWDVGHQTYPHKILTSRRERMHSIRQGGGLSGFPKREESPYDTFGVGHSSTSISAAQGMAIGAKMAGTERKVAAIIGDGAMTAGMAFEALNHAAHTETDMLVVLNDNNMSISPNVGGLSTYLSKIWASKFYNSLREGSKQVLGKIPPAWEFARRTEEHFKGFMSPGTLFEEMGFNYVGPINGHDLGDLVRCLRNLREIKGPKLLHVITQKGKGFEPAELDPVGYHALNKIEPKKAAIGAVDAPKKVKFQDVFGQWLCDMAARDDKLIGITPAMCEGSGMVGFAQQFPERFYDVAIAEQHAVTLAAGMACEGQKPVVAIYSTFLQRAYDQLIHDVALQNLDVTFAIDRAGLVGEDGPTHSGSFDISYLRCIPQMLLATPSDENECRQLLYTAYQYPGPAAVRYPRGTGAGAVIEQAMTALPIGKGVVRREGKQVALLCFGTLLPTAAQVAEKLGASLCDMRFVKPLDSELIARMAASHSLLVTLEENALAGGAGSAVSEYLNSQGIAIPLLQLGFADEFIDHNSQKQQLAQQGLDAKGIETAITQHLAMMAAATKAVAG</sequence>
<accession>B3PF22</accession>
<gene>
    <name evidence="1" type="primary">dxs</name>
    <name type="ordered locus">CJA_3336</name>
</gene>
<protein>
    <recommendedName>
        <fullName evidence="1">1-deoxy-D-xylulose-5-phosphate synthase</fullName>
        <ecNumber evidence="1">2.2.1.7</ecNumber>
    </recommendedName>
    <alternativeName>
        <fullName evidence="1">1-deoxyxylulose-5-phosphate synthase</fullName>
        <shortName evidence="1">DXP synthase</shortName>
        <shortName evidence="1">DXPS</shortName>
    </alternativeName>
</protein>
<proteinExistence type="inferred from homology"/>
<dbReference type="EC" id="2.2.1.7" evidence="1"/>
<dbReference type="EMBL" id="CP000934">
    <property type="protein sequence ID" value="ACE82992.1"/>
    <property type="molecule type" value="Genomic_DNA"/>
</dbReference>
<dbReference type="RefSeq" id="WP_012488912.1">
    <property type="nucleotide sequence ID" value="NC_010995.1"/>
</dbReference>
<dbReference type="SMR" id="B3PF22"/>
<dbReference type="STRING" id="498211.CJA_3336"/>
<dbReference type="KEGG" id="cja:CJA_3336"/>
<dbReference type="eggNOG" id="COG1154">
    <property type="taxonomic scope" value="Bacteria"/>
</dbReference>
<dbReference type="HOGENOM" id="CLU_009227_1_4_6"/>
<dbReference type="OrthoDB" id="9803371at2"/>
<dbReference type="UniPathway" id="UPA00064">
    <property type="reaction ID" value="UER00091"/>
</dbReference>
<dbReference type="Proteomes" id="UP000001036">
    <property type="component" value="Chromosome"/>
</dbReference>
<dbReference type="GO" id="GO:0005829">
    <property type="term" value="C:cytosol"/>
    <property type="evidence" value="ECO:0007669"/>
    <property type="project" value="TreeGrafter"/>
</dbReference>
<dbReference type="GO" id="GO:0008661">
    <property type="term" value="F:1-deoxy-D-xylulose-5-phosphate synthase activity"/>
    <property type="evidence" value="ECO:0007669"/>
    <property type="project" value="UniProtKB-UniRule"/>
</dbReference>
<dbReference type="GO" id="GO:0000287">
    <property type="term" value="F:magnesium ion binding"/>
    <property type="evidence" value="ECO:0007669"/>
    <property type="project" value="UniProtKB-UniRule"/>
</dbReference>
<dbReference type="GO" id="GO:0030976">
    <property type="term" value="F:thiamine pyrophosphate binding"/>
    <property type="evidence" value="ECO:0007669"/>
    <property type="project" value="UniProtKB-UniRule"/>
</dbReference>
<dbReference type="GO" id="GO:0052865">
    <property type="term" value="P:1-deoxy-D-xylulose 5-phosphate biosynthetic process"/>
    <property type="evidence" value="ECO:0007669"/>
    <property type="project" value="UniProtKB-UniPathway"/>
</dbReference>
<dbReference type="GO" id="GO:0019288">
    <property type="term" value="P:isopentenyl diphosphate biosynthetic process, methylerythritol 4-phosphate pathway"/>
    <property type="evidence" value="ECO:0007669"/>
    <property type="project" value="TreeGrafter"/>
</dbReference>
<dbReference type="GO" id="GO:0016114">
    <property type="term" value="P:terpenoid biosynthetic process"/>
    <property type="evidence" value="ECO:0007669"/>
    <property type="project" value="UniProtKB-UniRule"/>
</dbReference>
<dbReference type="GO" id="GO:0009228">
    <property type="term" value="P:thiamine biosynthetic process"/>
    <property type="evidence" value="ECO:0007669"/>
    <property type="project" value="UniProtKB-UniRule"/>
</dbReference>
<dbReference type="CDD" id="cd02007">
    <property type="entry name" value="TPP_DXS"/>
    <property type="match status" value="1"/>
</dbReference>
<dbReference type="CDD" id="cd07033">
    <property type="entry name" value="TPP_PYR_DXS_TK_like"/>
    <property type="match status" value="1"/>
</dbReference>
<dbReference type="FunFam" id="3.40.50.920:FF:000002">
    <property type="entry name" value="1-deoxy-D-xylulose-5-phosphate synthase"/>
    <property type="match status" value="1"/>
</dbReference>
<dbReference type="FunFam" id="3.40.50.970:FF:000005">
    <property type="entry name" value="1-deoxy-D-xylulose-5-phosphate synthase"/>
    <property type="match status" value="1"/>
</dbReference>
<dbReference type="Gene3D" id="3.40.50.920">
    <property type="match status" value="1"/>
</dbReference>
<dbReference type="Gene3D" id="3.40.50.970">
    <property type="match status" value="2"/>
</dbReference>
<dbReference type="HAMAP" id="MF_00315">
    <property type="entry name" value="DXP_synth"/>
    <property type="match status" value="1"/>
</dbReference>
<dbReference type="InterPro" id="IPR005477">
    <property type="entry name" value="Dxylulose-5-P_synthase"/>
</dbReference>
<dbReference type="InterPro" id="IPR029061">
    <property type="entry name" value="THDP-binding"/>
</dbReference>
<dbReference type="InterPro" id="IPR009014">
    <property type="entry name" value="Transketo_C/PFOR_II"/>
</dbReference>
<dbReference type="InterPro" id="IPR005475">
    <property type="entry name" value="Transketolase-like_Pyr-bd"/>
</dbReference>
<dbReference type="InterPro" id="IPR020826">
    <property type="entry name" value="Transketolase_BS"/>
</dbReference>
<dbReference type="InterPro" id="IPR033248">
    <property type="entry name" value="Transketolase_C"/>
</dbReference>
<dbReference type="NCBIfam" id="TIGR00204">
    <property type="entry name" value="dxs"/>
    <property type="match status" value="1"/>
</dbReference>
<dbReference type="NCBIfam" id="NF003933">
    <property type="entry name" value="PRK05444.2-2"/>
    <property type="match status" value="1"/>
</dbReference>
<dbReference type="PANTHER" id="PTHR43322">
    <property type="entry name" value="1-D-DEOXYXYLULOSE 5-PHOSPHATE SYNTHASE-RELATED"/>
    <property type="match status" value="1"/>
</dbReference>
<dbReference type="PANTHER" id="PTHR43322:SF5">
    <property type="entry name" value="1-DEOXY-D-XYLULOSE-5-PHOSPHATE SYNTHASE, CHLOROPLASTIC"/>
    <property type="match status" value="1"/>
</dbReference>
<dbReference type="Pfam" id="PF13292">
    <property type="entry name" value="DXP_synthase_N"/>
    <property type="match status" value="1"/>
</dbReference>
<dbReference type="Pfam" id="PF02779">
    <property type="entry name" value="Transket_pyr"/>
    <property type="match status" value="1"/>
</dbReference>
<dbReference type="Pfam" id="PF02780">
    <property type="entry name" value="Transketolase_C"/>
    <property type="match status" value="1"/>
</dbReference>
<dbReference type="SMART" id="SM00861">
    <property type="entry name" value="Transket_pyr"/>
    <property type="match status" value="1"/>
</dbReference>
<dbReference type="SUPFAM" id="SSF52518">
    <property type="entry name" value="Thiamin diphosphate-binding fold (THDP-binding)"/>
    <property type="match status" value="2"/>
</dbReference>
<dbReference type="SUPFAM" id="SSF52922">
    <property type="entry name" value="TK C-terminal domain-like"/>
    <property type="match status" value="1"/>
</dbReference>
<dbReference type="PROSITE" id="PS00802">
    <property type="entry name" value="TRANSKETOLASE_2"/>
    <property type="match status" value="1"/>
</dbReference>
<keyword id="KW-0414">Isoprene biosynthesis</keyword>
<keyword id="KW-0460">Magnesium</keyword>
<keyword id="KW-0479">Metal-binding</keyword>
<keyword id="KW-1185">Reference proteome</keyword>
<keyword id="KW-0784">Thiamine biosynthesis</keyword>
<keyword id="KW-0786">Thiamine pyrophosphate</keyword>
<keyword id="KW-0808">Transferase</keyword>
<reference key="1">
    <citation type="journal article" date="2008" name="J. Bacteriol.">
        <title>Insights into plant cell wall degradation from the genome sequence of the soil bacterium Cellvibrio japonicus.</title>
        <authorList>
            <person name="DeBoy R.T."/>
            <person name="Mongodin E.F."/>
            <person name="Fouts D.E."/>
            <person name="Tailford L.E."/>
            <person name="Khouri H."/>
            <person name="Emerson J.B."/>
            <person name="Mohamoud Y."/>
            <person name="Watkins K."/>
            <person name="Henrissat B."/>
            <person name="Gilbert H.J."/>
            <person name="Nelson K.E."/>
        </authorList>
    </citation>
    <scope>NUCLEOTIDE SEQUENCE [LARGE SCALE GENOMIC DNA]</scope>
    <source>
        <strain>Ueda107</strain>
    </source>
</reference>
<name>DXS_CELJU</name>
<organism>
    <name type="scientific">Cellvibrio japonicus (strain Ueda107)</name>
    <name type="common">Pseudomonas fluorescens subsp. cellulosa</name>
    <dbReference type="NCBI Taxonomy" id="498211"/>
    <lineage>
        <taxon>Bacteria</taxon>
        <taxon>Pseudomonadati</taxon>
        <taxon>Pseudomonadota</taxon>
        <taxon>Gammaproteobacteria</taxon>
        <taxon>Cellvibrionales</taxon>
        <taxon>Cellvibrionaceae</taxon>
        <taxon>Cellvibrio</taxon>
    </lineage>
</organism>
<evidence type="ECO:0000255" key="1">
    <source>
        <dbReference type="HAMAP-Rule" id="MF_00315"/>
    </source>
</evidence>
<feature type="chain" id="PRO_1000115729" description="1-deoxy-D-xylulose-5-phosphate synthase">
    <location>
        <begin position="1"/>
        <end position="636"/>
    </location>
</feature>
<feature type="binding site" evidence="1">
    <location>
        <position position="84"/>
    </location>
    <ligand>
        <name>thiamine diphosphate</name>
        <dbReference type="ChEBI" id="CHEBI:58937"/>
    </ligand>
</feature>
<feature type="binding site" evidence="1">
    <location>
        <begin position="125"/>
        <end position="127"/>
    </location>
    <ligand>
        <name>thiamine diphosphate</name>
        <dbReference type="ChEBI" id="CHEBI:58937"/>
    </ligand>
</feature>
<feature type="binding site" evidence="1">
    <location>
        <position position="156"/>
    </location>
    <ligand>
        <name>Mg(2+)</name>
        <dbReference type="ChEBI" id="CHEBI:18420"/>
    </ligand>
</feature>
<feature type="binding site" evidence="1">
    <location>
        <begin position="157"/>
        <end position="158"/>
    </location>
    <ligand>
        <name>thiamine diphosphate</name>
        <dbReference type="ChEBI" id="CHEBI:58937"/>
    </ligand>
</feature>
<feature type="binding site" evidence="1">
    <location>
        <position position="185"/>
    </location>
    <ligand>
        <name>Mg(2+)</name>
        <dbReference type="ChEBI" id="CHEBI:18420"/>
    </ligand>
</feature>
<feature type="binding site" evidence="1">
    <location>
        <position position="185"/>
    </location>
    <ligand>
        <name>thiamine diphosphate</name>
        <dbReference type="ChEBI" id="CHEBI:58937"/>
    </ligand>
</feature>
<feature type="binding site" evidence="1">
    <location>
        <position position="292"/>
    </location>
    <ligand>
        <name>thiamine diphosphate</name>
        <dbReference type="ChEBI" id="CHEBI:58937"/>
    </ligand>
</feature>
<feature type="binding site" evidence="1">
    <location>
        <position position="375"/>
    </location>
    <ligand>
        <name>thiamine diphosphate</name>
        <dbReference type="ChEBI" id="CHEBI:58937"/>
    </ligand>
</feature>
<comment type="function">
    <text evidence="1">Catalyzes the acyloin condensation reaction between C atoms 2 and 3 of pyruvate and glyceraldehyde 3-phosphate to yield 1-deoxy-D-xylulose-5-phosphate (DXP).</text>
</comment>
<comment type="catalytic activity">
    <reaction evidence="1">
        <text>D-glyceraldehyde 3-phosphate + pyruvate + H(+) = 1-deoxy-D-xylulose 5-phosphate + CO2</text>
        <dbReference type="Rhea" id="RHEA:12605"/>
        <dbReference type="ChEBI" id="CHEBI:15361"/>
        <dbReference type="ChEBI" id="CHEBI:15378"/>
        <dbReference type="ChEBI" id="CHEBI:16526"/>
        <dbReference type="ChEBI" id="CHEBI:57792"/>
        <dbReference type="ChEBI" id="CHEBI:59776"/>
        <dbReference type="EC" id="2.2.1.7"/>
    </reaction>
</comment>
<comment type="cofactor">
    <cofactor evidence="1">
        <name>Mg(2+)</name>
        <dbReference type="ChEBI" id="CHEBI:18420"/>
    </cofactor>
    <text evidence="1">Binds 1 Mg(2+) ion per subunit.</text>
</comment>
<comment type="cofactor">
    <cofactor evidence="1">
        <name>thiamine diphosphate</name>
        <dbReference type="ChEBI" id="CHEBI:58937"/>
    </cofactor>
    <text evidence="1">Binds 1 thiamine pyrophosphate per subunit.</text>
</comment>
<comment type="pathway">
    <text evidence="1">Metabolic intermediate biosynthesis; 1-deoxy-D-xylulose 5-phosphate biosynthesis; 1-deoxy-D-xylulose 5-phosphate from D-glyceraldehyde 3-phosphate and pyruvate: step 1/1.</text>
</comment>
<comment type="subunit">
    <text evidence="1">Homodimer.</text>
</comment>
<comment type="similarity">
    <text evidence="1">Belongs to the transketolase family. DXPS subfamily.</text>
</comment>